<dbReference type="EMBL" id="FM211192">
    <property type="protein sequence ID" value="CAR72007.1"/>
    <property type="molecule type" value="Genomic_DNA"/>
</dbReference>
<dbReference type="SMR" id="B8ZSE2"/>
<dbReference type="KEGG" id="mlb:MLBr01911"/>
<dbReference type="HOGENOM" id="CLU_190949_0_2_11"/>
<dbReference type="Proteomes" id="UP000006900">
    <property type="component" value="Chromosome"/>
</dbReference>
<dbReference type="GO" id="GO:0005737">
    <property type="term" value="C:cytoplasm"/>
    <property type="evidence" value="ECO:0007669"/>
    <property type="project" value="UniProtKB-ARBA"/>
</dbReference>
<dbReference type="GO" id="GO:1990904">
    <property type="term" value="C:ribonucleoprotein complex"/>
    <property type="evidence" value="ECO:0007669"/>
    <property type="project" value="UniProtKB-KW"/>
</dbReference>
<dbReference type="GO" id="GO:0005840">
    <property type="term" value="C:ribosome"/>
    <property type="evidence" value="ECO:0007669"/>
    <property type="project" value="UniProtKB-KW"/>
</dbReference>
<dbReference type="GO" id="GO:0003735">
    <property type="term" value="F:structural constituent of ribosome"/>
    <property type="evidence" value="ECO:0007669"/>
    <property type="project" value="InterPro"/>
</dbReference>
<dbReference type="GO" id="GO:0006412">
    <property type="term" value="P:translation"/>
    <property type="evidence" value="ECO:0007669"/>
    <property type="project" value="UniProtKB-UniRule"/>
</dbReference>
<dbReference type="Gene3D" id="2.20.28.120">
    <property type="entry name" value="Ribosomal protein L33"/>
    <property type="match status" value="1"/>
</dbReference>
<dbReference type="HAMAP" id="MF_00294">
    <property type="entry name" value="Ribosomal_bL33"/>
    <property type="match status" value="1"/>
</dbReference>
<dbReference type="InterPro" id="IPR001705">
    <property type="entry name" value="Ribosomal_bL33"/>
</dbReference>
<dbReference type="InterPro" id="IPR018264">
    <property type="entry name" value="Ribosomal_bL33_CS"/>
</dbReference>
<dbReference type="InterPro" id="IPR038584">
    <property type="entry name" value="Ribosomal_bL33_sf"/>
</dbReference>
<dbReference type="InterPro" id="IPR011332">
    <property type="entry name" value="Ribosomal_zn-bd"/>
</dbReference>
<dbReference type="NCBIfam" id="NF001764">
    <property type="entry name" value="PRK00504.1"/>
    <property type="match status" value="1"/>
</dbReference>
<dbReference type="NCBIfam" id="NF001860">
    <property type="entry name" value="PRK00595.1"/>
    <property type="match status" value="1"/>
</dbReference>
<dbReference type="NCBIfam" id="TIGR01023">
    <property type="entry name" value="rpmG_bact"/>
    <property type="match status" value="1"/>
</dbReference>
<dbReference type="PANTHER" id="PTHR43168">
    <property type="entry name" value="50S RIBOSOMAL PROTEIN L33, CHLOROPLASTIC"/>
    <property type="match status" value="1"/>
</dbReference>
<dbReference type="PANTHER" id="PTHR43168:SF2">
    <property type="entry name" value="LARGE RIBOSOMAL SUBUNIT PROTEIN BL33C"/>
    <property type="match status" value="1"/>
</dbReference>
<dbReference type="Pfam" id="PF00471">
    <property type="entry name" value="Ribosomal_L33"/>
    <property type="match status" value="1"/>
</dbReference>
<dbReference type="SUPFAM" id="SSF57829">
    <property type="entry name" value="Zn-binding ribosomal proteins"/>
    <property type="match status" value="1"/>
</dbReference>
<dbReference type="PROSITE" id="PS00582">
    <property type="entry name" value="RIBOSOMAL_L33"/>
    <property type="match status" value="1"/>
</dbReference>
<reference key="1">
    <citation type="journal article" date="2009" name="Nat. Genet.">
        <title>Comparative genomic and phylogeographic analysis of Mycobacterium leprae.</title>
        <authorList>
            <person name="Monot M."/>
            <person name="Honore N."/>
            <person name="Garnier T."/>
            <person name="Zidane N."/>
            <person name="Sherafi D."/>
            <person name="Paniz-Mondolfi A."/>
            <person name="Matsuoka M."/>
            <person name="Taylor G.M."/>
            <person name="Donoghue H.D."/>
            <person name="Bouwman A."/>
            <person name="Mays S."/>
            <person name="Watson C."/>
            <person name="Lockwood D."/>
            <person name="Khamispour A."/>
            <person name="Dowlati Y."/>
            <person name="Jianping S."/>
            <person name="Rea T.H."/>
            <person name="Vera-Cabrera L."/>
            <person name="Stefani M.M."/>
            <person name="Banu S."/>
            <person name="Macdonald M."/>
            <person name="Sapkota B.R."/>
            <person name="Spencer J.S."/>
            <person name="Thomas J."/>
            <person name="Harshman K."/>
            <person name="Singh P."/>
            <person name="Busso P."/>
            <person name="Gattiker A."/>
            <person name="Rougemont J."/>
            <person name="Brennan P.J."/>
            <person name="Cole S.T."/>
        </authorList>
    </citation>
    <scope>NUCLEOTIDE SEQUENCE [LARGE SCALE GENOMIC DNA]</scope>
    <source>
        <strain>Br4923</strain>
    </source>
</reference>
<sequence length="55" mass="6607">MASSTDVRPKITMACEVCKHRNYITKKNRRNDPDRMELKKFCRNCGKHQSHRETR</sequence>
<gene>
    <name evidence="1" type="primary">rpmG</name>
    <name type="ordered locus">MLBr01911</name>
</gene>
<organism>
    <name type="scientific">Mycobacterium leprae (strain Br4923)</name>
    <dbReference type="NCBI Taxonomy" id="561304"/>
    <lineage>
        <taxon>Bacteria</taxon>
        <taxon>Bacillati</taxon>
        <taxon>Actinomycetota</taxon>
        <taxon>Actinomycetes</taxon>
        <taxon>Mycobacteriales</taxon>
        <taxon>Mycobacteriaceae</taxon>
        <taxon>Mycobacterium</taxon>
    </lineage>
</organism>
<keyword id="KW-0687">Ribonucleoprotein</keyword>
<keyword id="KW-0689">Ribosomal protein</keyword>
<proteinExistence type="inferred from homology"/>
<protein>
    <recommendedName>
        <fullName evidence="1">Large ribosomal subunit protein bL33</fullName>
    </recommendedName>
    <alternativeName>
        <fullName evidence="2">50S ribosomal protein L33</fullName>
    </alternativeName>
</protein>
<feature type="chain" id="PRO_1000194061" description="Large ribosomal subunit protein bL33">
    <location>
        <begin position="1"/>
        <end position="55"/>
    </location>
</feature>
<name>RL33_MYCLB</name>
<evidence type="ECO:0000255" key="1">
    <source>
        <dbReference type="HAMAP-Rule" id="MF_00294"/>
    </source>
</evidence>
<evidence type="ECO:0000305" key="2"/>
<accession>B8ZSE2</accession>
<comment type="similarity">
    <text evidence="1">Belongs to the bacterial ribosomal protein bL33 family.</text>
</comment>